<sequence length="63" mass="6899">SSWQKAGISFNKYLAIAARTVQRSLKNDLKVAAEKRYISDAKVQKLEKGNVVSTTDLASNKSA</sequence>
<comment type="function">
    <text evidence="1 3 4">Mitochondrial membrane ATP synthase (F(1)F(0) ATP synthase or Complex V) produces ATP from ADP in the presence of a proton gradient across the membrane which is generated by electron transport complexes of the respiratory chain (PubMed:25759169). F-type ATP synthases consist of two structural domains, F(1) - containing the extramembraneous catalytic core, and F(0) - containing the membrane proton channel, linked together by a central stalk and a peripheral stalk (PubMed:27791192). During catalysis, ATP synthesis in the catalytic domain of F(1) is coupled via a rotary mechanism of the central stalk subunits to proton translocation (By similarity). Part of the complex F(1) domain and the central stalk which is part of the complex rotary element (By similarity). Rotation of the central stalk against the surrounding alpha/ATP1(3)beta/ATP2(3) subunits leads to hydrolysis of ATP in three separate catalytic sites on the beta/ATP2 subunits (By similarity).</text>
</comment>
<comment type="subunit">
    <text evidence="1 3 4">F-type ATP synthases have 2 components, the catalytic core F(1) and the membrane-embedded component F(0), linked together by a central stalk and a peripheral stalk (PubMed:27791192). The central stalk, also called rotor shaft, is often seen as part of F(1) (PubMed:27791192). The peripheral stalk is seen as part of F(0). F(0) contains the membrane channel next to the rotor (PubMed:27791192). F-type ATP synthases form dimers but each monomer functions independently in ATP generation (By similarity). The dimer consists of 18 different polypeptides: ATP1 (subunit alpha, part of F(1), 3 molecules per monomer), ATP2 (subunit beta, part of F(1), 3 molecules per monomer), ATP3 (subunit gamma, part of the central stalk), ATP4 (subunit b, part of the peripheral stalk), ATP5/OSCP (subunit 5/OSCP, part of the peripheral stalk), ATP6 (subunit a, part of the peripheral stalk), ATP7 (subunit d, part of the peripheral stalk), ATP8 (subunit 8, part of the peripheral stalk), OLI1 (subunit c, part of the rotor, 10 molecules per monomer), ATP14 (subunit h, part of the peripheral stalk), ATP15 (subunit epsilon, part of the central stalk), ATP16 (subunit delta, part of the central stalk), ATP17 (subunit f, part of the peripheral stalk), ATP18 (subunit i/j, part of the peripheral stalk) (PubMed:25759169, PubMed:27791192). Dimer-specific subunits are ATP19 (subunit k, at interface between monomers), ATP20 (subunit g, at interface between monomers), TIM11 (subunit e, at interface between monomers) (By similarity). Also contains subunit L (PubMed:25759169).</text>
</comment>
<comment type="subcellular location">
    <subcellularLocation>
        <location evidence="9">Mitochondrion inner membrane</location>
        <topology evidence="9">Peripheral membrane protein</topology>
        <orientation evidence="9">Matrix side</orientation>
    </subcellularLocation>
    <text evidence="9">The F-type ATP synthase complex is anchored in the mitochondrial inner membrane via the F(0) domain with the F(1) domain and the peripheral stalk extending into the mitochondrial matrix.</text>
</comment>
<comment type="mass spectrometry" mass="6899.0" method="MALDI" evidence="3"/>
<comment type="similarity">
    <text evidence="8">Belongs to the eukaryotic ATPase epsilon family.</text>
</comment>
<accession>A0A1L1QK34</accession>
<accession>C0HK55</accession>
<evidence type="ECO:0000250" key="1">
    <source>
        <dbReference type="UniProtKB" id="C0HLB1"/>
    </source>
</evidence>
<evidence type="ECO:0000250" key="2">
    <source>
        <dbReference type="UniProtKB" id="P21306"/>
    </source>
</evidence>
<evidence type="ECO:0000269" key="3">
    <source>
    </source>
</evidence>
<evidence type="ECO:0000269" key="4">
    <source>
    </source>
</evidence>
<evidence type="ECO:0000269" key="5">
    <source ref="1"/>
</evidence>
<evidence type="ECO:0000303" key="6">
    <source>
    </source>
</evidence>
<evidence type="ECO:0000303" key="7">
    <source ref="1"/>
</evidence>
<evidence type="ECO:0000305" key="8"/>
<evidence type="ECO:0000305" key="9">
    <source>
    </source>
</evidence>
<evidence type="ECO:0000312" key="10">
    <source>
        <dbReference type="PDB" id="5LQX"/>
    </source>
</evidence>
<evidence type="ECO:0000312" key="11">
    <source>
        <dbReference type="PDB" id="5LQY"/>
    </source>
</evidence>
<name>ATP5E_PICAN</name>
<gene>
    <name evidence="2" type="primary">ATP15</name>
</gene>
<keyword id="KW-0002">3D-structure</keyword>
<keyword id="KW-0066">ATP synthesis</keyword>
<keyword id="KW-0139">CF(1)</keyword>
<keyword id="KW-0903">Direct protein sequencing</keyword>
<keyword id="KW-0375">Hydrogen ion transport</keyword>
<keyword id="KW-0406">Ion transport</keyword>
<keyword id="KW-0472">Membrane</keyword>
<keyword id="KW-0496">Mitochondrion</keyword>
<keyword id="KW-0999">Mitochondrion inner membrane</keyword>
<keyword id="KW-0813">Transport</keyword>
<proteinExistence type="evidence at protein level"/>
<organism evidence="10">
    <name type="scientific">Pichia angusta</name>
    <name type="common">Yeast</name>
    <name type="synonym">Hansenula polymorpha</name>
    <dbReference type="NCBI Taxonomy" id="870730"/>
    <lineage>
        <taxon>Eukaryota</taxon>
        <taxon>Fungi</taxon>
        <taxon>Dikarya</taxon>
        <taxon>Ascomycota</taxon>
        <taxon>Saccharomycotina</taxon>
        <taxon>Pichiomycetes</taxon>
        <taxon>Pichiales</taxon>
        <taxon>Pichiaceae</taxon>
        <taxon>Ogataea</taxon>
    </lineage>
</organism>
<protein>
    <recommendedName>
        <fullName evidence="2">ATP synthase subunit epsilon, mitochondrial</fullName>
        <shortName evidence="2">ATPase subunit epsilon</shortName>
    </recommendedName>
</protein>
<dbReference type="PDB" id="5LQX">
    <property type="method" value="EM"/>
    <property type="resolution" value="7.90 A"/>
    <property type="chains" value="I=1-63"/>
</dbReference>
<dbReference type="PDB" id="5LQY">
    <property type="method" value="EM"/>
    <property type="resolution" value="7.80 A"/>
    <property type="chains" value="I=1-63"/>
</dbReference>
<dbReference type="PDBsum" id="5LQX"/>
<dbReference type="PDBsum" id="5LQY"/>
<dbReference type="SMR" id="A0A1L1QK34"/>
<dbReference type="GO" id="GO:0005743">
    <property type="term" value="C:mitochondrial inner membrane"/>
    <property type="evidence" value="ECO:0007669"/>
    <property type="project" value="UniProtKB-SubCell"/>
</dbReference>
<dbReference type="GO" id="GO:0045259">
    <property type="term" value="C:proton-transporting ATP synthase complex"/>
    <property type="evidence" value="ECO:0007669"/>
    <property type="project" value="UniProtKB-KW"/>
</dbReference>
<dbReference type="GO" id="GO:0046933">
    <property type="term" value="F:proton-transporting ATP synthase activity, rotational mechanism"/>
    <property type="evidence" value="ECO:0007669"/>
    <property type="project" value="InterPro"/>
</dbReference>
<dbReference type="CDD" id="cd12153">
    <property type="entry name" value="F1-ATPase_epsilon"/>
    <property type="match status" value="1"/>
</dbReference>
<dbReference type="Gene3D" id="1.10.1620.20">
    <property type="entry name" value="ATP synthase, F1 complex, epsilon subunit superfamily, mitochondrial"/>
    <property type="match status" value="1"/>
</dbReference>
<dbReference type="InterPro" id="IPR006721">
    <property type="entry name" value="ATP_synth_F1_esu_mt"/>
</dbReference>
<dbReference type="InterPro" id="IPR036742">
    <property type="entry name" value="ATP_synth_F1_esu_sf_mt"/>
</dbReference>
<dbReference type="Pfam" id="PF04627">
    <property type="entry name" value="ATP-synt_Eps"/>
    <property type="match status" value="1"/>
</dbReference>
<dbReference type="SUPFAM" id="SSF48690">
    <property type="entry name" value="Epsilon subunit of mitochondrial F1F0-ATP synthase"/>
    <property type="match status" value="1"/>
</dbReference>
<feature type="chain" id="PRO_0000445329" description="ATP synthase subunit epsilon, mitochondrial" evidence="5">
    <location>
        <begin position="1"/>
        <end position="63"/>
    </location>
</feature>
<reference evidence="8" key="1">
    <citation type="submission" date="2016-08" db="UniProtKB">
        <authorList>
            <person name="Fearnley I.M."/>
        </authorList>
    </citation>
    <scope>PARTIAL PROTEIN SEQUENCE</scope>
    <source>
        <strain evidence="7">A16 / NCYC 2310</strain>
    </source>
</reference>
<reference evidence="8" key="2">
    <citation type="journal article" date="2015" name="Biochem. J.">
        <title>The purification and characterization of ATP synthase complexes from the mitochondria of four fungal species.</title>
        <authorList>
            <person name="Liu S."/>
            <person name="Charlesworth T.J."/>
            <person name="Bason J.V."/>
            <person name="Montgomery M.G."/>
            <person name="Harbour M.E."/>
            <person name="Fearnley I.M."/>
            <person name="Walker J.E."/>
        </authorList>
    </citation>
    <scope>PROTEIN SEQUENCE OF 1-19</scope>
    <scope>IDENTIFICATION IN ATP SYNTHASE COMPLEX</scope>
    <scope>FUNCTION OF ATPASE COMPLEX</scope>
    <scope>SUBUNIT</scope>
    <scope>SUBCELLULAR LOCATION</scope>
    <scope>MASS SPECTROMETRY</scope>
    <scope>IDENTIFICATION BY MASS SPECTROMETRY</scope>
    <source>
        <strain evidence="6">A16 / NCYC 2310</strain>
    </source>
</reference>
<reference evidence="10 11" key="3">
    <citation type="journal article" date="2016" name="Proc. Natl. Acad. Sci. U.S.A.">
        <title>Structure of the mitochondrial ATP synthase from Pichia angusta determined by electron cryo-microscopy.</title>
        <authorList>
            <person name="Vinothkumar K.R."/>
            <person name="Montgomery M.G."/>
            <person name="Liu S."/>
            <person name="Walker J.E."/>
        </authorList>
    </citation>
    <scope>STRUCTURE BY ELECTRON MICROSCOPY (7.0 ANGSTROMS) OF MONOMERIC ATP SYNTHASE COMPLEX IN COMPLEX WITH BOVINE ATPIF1</scope>
    <scope>FUNCTION</scope>
    <scope>SUBUNIT</scope>
    <scope>SUBCELLULAR LOCATION</scope>
</reference>